<reference key="1">
    <citation type="journal article" date="1992" name="J. Bacteriol.">
        <title>Analysis of eight out genes in a cluster required for pectic enzyme secretion by Erwinia chrysanthemi: sequence comparison with secretion genes from other Gram-negative bacteria.</title>
        <authorList>
            <person name="Lindeberg M."/>
            <person name="Collmer A."/>
        </authorList>
    </citation>
    <scope>NUCLEOTIDE SEQUENCE [GENOMIC DNA]</scope>
    <source>
        <strain>EC16</strain>
    </source>
</reference>
<reference key="2">
    <citation type="journal article" date="1999" name="J. Mol. Biol.">
        <title>Assembly of the type II secretion machinery of Erwinia chrysanthemi: direct interaction and associated conformational change between OutE, the putative ATP-binding component and the membrane protein OutL.</title>
        <authorList>
            <person name="Py B."/>
            <person name="Loiseau L."/>
            <person name="Barras F."/>
        </authorList>
    </citation>
    <scope>FUNCTION</scope>
    <scope>INTERACTION WITH OUTE</scope>
</reference>
<reference key="3">
    <citation type="journal article" date="2001" name="EMBO Rep.">
        <title>An inner membrane platform in the type II secretion machinery of Gram-negative bacteria.</title>
        <authorList>
            <person name="Py B."/>
            <person name="Loiseau L."/>
            <person name="Barras F."/>
        </authorList>
    </citation>
    <scope>INTERACTION WITH OUTE/GSPE; OUTE/GSPE AND OUTM/GSPM</scope>
    <scope>FUNCTION</scope>
</reference>
<dbReference type="EMBL" id="L02214">
    <property type="protein sequence ID" value="AAA24839.1"/>
    <property type="molecule type" value="Genomic_DNA"/>
</dbReference>
<dbReference type="PIR" id="A47755">
    <property type="entry name" value="A47755"/>
</dbReference>
<dbReference type="SMR" id="P31707"/>
<dbReference type="GO" id="GO:0009276">
    <property type="term" value="C:Gram-negative-bacterium-type cell wall"/>
    <property type="evidence" value="ECO:0007669"/>
    <property type="project" value="InterPro"/>
</dbReference>
<dbReference type="GO" id="GO:0005886">
    <property type="term" value="C:plasma membrane"/>
    <property type="evidence" value="ECO:0007669"/>
    <property type="project" value="UniProtKB-SubCell"/>
</dbReference>
<dbReference type="GO" id="GO:0015627">
    <property type="term" value="C:type II protein secretion system complex"/>
    <property type="evidence" value="ECO:0007669"/>
    <property type="project" value="InterPro"/>
</dbReference>
<dbReference type="GO" id="GO:0015628">
    <property type="term" value="P:protein secretion by the type II secretion system"/>
    <property type="evidence" value="ECO:0007669"/>
    <property type="project" value="InterPro"/>
</dbReference>
<dbReference type="CDD" id="cd24017">
    <property type="entry name" value="ASKHA_T2SSL_N"/>
    <property type="match status" value="1"/>
</dbReference>
<dbReference type="Gene3D" id="3.30.420.370">
    <property type="match status" value="1"/>
</dbReference>
<dbReference type="Gene3D" id="3.30.420.380">
    <property type="match status" value="1"/>
</dbReference>
<dbReference type="Gene3D" id="3.30.1360.100">
    <property type="entry name" value="General secretion pathway protein M, EpsM"/>
    <property type="match status" value="1"/>
</dbReference>
<dbReference type="InterPro" id="IPR043129">
    <property type="entry name" value="ATPase_NBD"/>
</dbReference>
<dbReference type="InterPro" id="IPR024230">
    <property type="entry name" value="GspL_cyto_dom"/>
</dbReference>
<dbReference type="InterPro" id="IPR025691">
    <property type="entry name" value="GspL_pp_dom"/>
</dbReference>
<dbReference type="InterPro" id="IPR007812">
    <property type="entry name" value="T2SS_protein-GspL"/>
</dbReference>
<dbReference type="NCBIfam" id="TIGR01709">
    <property type="entry name" value="typeII_sec_gspL"/>
    <property type="match status" value="1"/>
</dbReference>
<dbReference type="Pfam" id="PF12693">
    <property type="entry name" value="GspL_C"/>
    <property type="match status" value="1"/>
</dbReference>
<dbReference type="Pfam" id="PF05134">
    <property type="entry name" value="T2SSL"/>
    <property type="match status" value="1"/>
</dbReference>
<dbReference type="PIRSF" id="PIRSF015761">
    <property type="entry name" value="Protein_L"/>
    <property type="match status" value="1"/>
</dbReference>
<dbReference type="SUPFAM" id="SSF53067">
    <property type="entry name" value="Actin-like ATPase domain"/>
    <property type="match status" value="2"/>
</dbReference>
<protein>
    <recommendedName>
        <fullName>Type II secretion system protein L</fullName>
        <shortName>T2SS protein L</shortName>
    </recommendedName>
    <alternativeName>
        <fullName>General secretion pathway protein L</fullName>
    </alternativeName>
    <alternativeName>
        <fullName>Pectic enzymes secretion protein OutL</fullName>
    </alternativeName>
</protein>
<proteinExistence type="evidence at protein level"/>
<accession>P31707</accession>
<comment type="function">
    <text evidence="1 4 5">Inner membrane component of the type II secretion system required for the energy-dependent secretion of extracellular factors such as proteases and toxins from the periplasm. Plays a role in the complex assembly and recruits OutM resulting in a stable complex in the inner membrane (By similarity). Provides thus a link between the energy-providing OutE protein in the cytoplasm and the rest of the T2SS machinery (PubMed:10356336, PubMed:11266368).</text>
</comment>
<comment type="subunit">
    <text evidence="2 4 5">Type II secretion system is composed of four main components: the outer membrane complex, the inner membrane complex, the cytoplasmic secretion ATPase and the periplasm-spanning pseudopilus (By similarity). Forms homodimers. Interacts with OutM/GspM (PubMed:11266368). Interacts with OutE/GspE and OutF/GspF (PubMed:10356336, PubMed:11266368).</text>
</comment>
<comment type="subcellular location">
    <subcellularLocation>
        <location evidence="1">Cell inner membrane</location>
        <topology evidence="1">Single-pass membrane protein</topology>
    </subcellularLocation>
</comment>
<comment type="similarity">
    <text evidence="6">Belongs to the GSP L family.</text>
</comment>
<name>GSPL_DICCH</name>
<keyword id="KW-0997">Cell inner membrane</keyword>
<keyword id="KW-1003">Cell membrane</keyword>
<keyword id="KW-0472">Membrane</keyword>
<keyword id="KW-0653">Protein transport</keyword>
<keyword id="KW-0812">Transmembrane</keyword>
<keyword id="KW-1133">Transmembrane helix</keyword>
<keyword id="KW-0813">Transport</keyword>
<gene>
    <name type="primary">outL</name>
</gene>
<sequence>MSKAENTSGKQQLILRLSADTSDSLEWLIWSVSRHQTLTTGSGTLESLQAVLADYPVISARVLVPSTDVTFHTLSLPRQSRRQLLQAIPFMLEEQVASDIDQLHFAVMDMHGDNATVAVVQKSRLRAWLNQCETLGVPVETVVPDVMALPRADSAWSAISHRNLWLFRLDSGIGMAAEENWYQSLLAFQPLPAVHCYSPVPASALTWQPQPVTDLLTLAAQVNLSMSMDLRQGEYAPVKPWKQALLPWRNVLIALSAWLLLVLGESVWTHYQWYRQADYWRQESVRVYRKLFPDEKQVVNPRAQMQRHLQEVRAGVSGFALTEQMNRLQQLVAQNEGVSLQSLSYDRSRDELRLSLRATSYAQMEQFRQQAQAYFQIPPGEMKQEKDHVEGQLTLRSQP</sequence>
<evidence type="ECO:0000250" key="1">
    <source>
        <dbReference type="UniProtKB" id="P25060"/>
    </source>
</evidence>
<evidence type="ECO:0000250" key="2">
    <source>
        <dbReference type="UniProtKB" id="Q00514"/>
    </source>
</evidence>
<evidence type="ECO:0000255" key="3"/>
<evidence type="ECO:0000269" key="4">
    <source>
    </source>
</evidence>
<evidence type="ECO:0000269" key="5">
    <source>
    </source>
</evidence>
<evidence type="ECO:0000305" key="6"/>
<feature type="chain" id="PRO_0000207316" description="Type II secretion system protein L">
    <location>
        <begin position="1"/>
        <end position="399"/>
    </location>
</feature>
<feature type="topological domain" description="Cytoplasmic" evidence="1">
    <location>
        <begin position="1"/>
        <end position="247"/>
    </location>
</feature>
<feature type="transmembrane region" description="Helical" evidence="3">
    <location>
        <begin position="248"/>
        <end position="264"/>
    </location>
</feature>
<feature type="topological domain" description="Periplasmic" evidence="1">
    <location>
        <begin position="265"/>
        <end position="399"/>
    </location>
</feature>
<organism>
    <name type="scientific">Dickeya chrysanthemi</name>
    <name type="common">Pectobacterium chrysanthemi</name>
    <name type="synonym">Erwinia chrysanthemi</name>
    <dbReference type="NCBI Taxonomy" id="556"/>
    <lineage>
        <taxon>Bacteria</taxon>
        <taxon>Pseudomonadati</taxon>
        <taxon>Pseudomonadota</taxon>
        <taxon>Gammaproteobacteria</taxon>
        <taxon>Enterobacterales</taxon>
        <taxon>Pectobacteriaceae</taxon>
        <taxon>Dickeya</taxon>
    </lineage>
</organism>